<feature type="chain" id="PRO_0000202001" description="Uncharacterized metal-dependent hydrolase YabD">
    <location>
        <begin position="1"/>
        <end position="255"/>
    </location>
</feature>
<feature type="binding site" evidence="1">
    <location>
        <position position="6"/>
    </location>
    <ligand>
        <name>a divalent metal cation</name>
        <dbReference type="ChEBI" id="CHEBI:60240"/>
        <label>1</label>
    </ligand>
</feature>
<feature type="binding site" evidence="1">
    <location>
        <position position="8"/>
    </location>
    <ligand>
        <name>a divalent metal cation</name>
        <dbReference type="ChEBI" id="CHEBI:60240"/>
        <label>1</label>
    </ligand>
</feature>
<feature type="binding site" evidence="1">
    <location>
        <position position="92"/>
    </location>
    <ligand>
        <name>a divalent metal cation</name>
        <dbReference type="ChEBI" id="CHEBI:60240"/>
        <label>1</label>
    </ligand>
</feature>
<feature type="binding site" evidence="1">
    <location>
        <position position="92"/>
    </location>
    <ligand>
        <name>a divalent metal cation</name>
        <dbReference type="ChEBI" id="CHEBI:60240"/>
        <label>2</label>
    </ligand>
</feature>
<feature type="binding site" evidence="1">
    <location>
        <position position="128"/>
    </location>
    <ligand>
        <name>a divalent metal cation</name>
        <dbReference type="ChEBI" id="CHEBI:60240"/>
        <label>2</label>
    </ligand>
</feature>
<feature type="binding site" evidence="1">
    <location>
        <position position="153"/>
    </location>
    <ligand>
        <name>a divalent metal cation</name>
        <dbReference type="ChEBI" id="CHEBI:60240"/>
        <label>2</label>
    </ligand>
</feature>
<feature type="binding site" evidence="1">
    <location>
        <position position="203"/>
    </location>
    <ligand>
        <name>a divalent metal cation</name>
        <dbReference type="ChEBI" id="CHEBI:60240"/>
        <label>1</label>
    </ligand>
</feature>
<evidence type="ECO:0000250" key="1">
    <source>
        <dbReference type="UniProtKB" id="P0AFQ7"/>
    </source>
</evidence>
<evidence type="ECO:0000305" key="2"/>
<reference key="1">
    <citation type="journal article" date="1994" name="DNA Res.">
        <title>Systematic sequencing of the 180 kilobase region of the Bacillus subtilis chromosome containing the replication origin.</title>
        <authorList>
            <person name="Ogasawara N."/>
            <person name="Nakai S."/>
            <person name="Yoshikawa H."/>
        </authorList>
    </citation>
    <scope>NUCLEOTIDE SEQUENCE [GENOMIC DNA]</scope>
    <source>
        <strain>168</strain>
    </source>
</reference>
<reference key="2">
    <citation type="journal article" date="1997" name="Nature">
        <title>The complete genome sequence of the Gram-positive bacterium Bacillus subtilis.</title>
        <authorList>
            <person name="Kunst F."/>
            <person name="Ogasawara N."/>
            <person name="Moszer I."/>
            <person name="Albertini A.M."/>
            <person name="Alloni G."/>
            <person name="Azevedo V."/>
            <person name="Bertero M.G."/>
            <person name="Bessieres P."/>
            <person name="Bolotin A."/>
            <person name="Borchert S."/>
            <person name="Borriss R."/>
            <person name="Boursier L."/>
            <person name="Brans A."/>
            <person name="Braun M."/>
            <person name="Brignell S.C."/>
            <person name="Bron S."/>
            <person name="Brouillet S."/>
            <person name="Bruschi C.V."/>
            <person name="Caldwell B."/>
            <person name="Capuano V."/>
            <person name="Carter N.M."/>
            <person name="Choi S.-K."/>
            <person name="Codani J.-J."/>
            <person name="Connerton I.F."/>
            <person name="Cummings N.J."/>
            <person name="Daniel R.A."/>
            <person name="Denizot F."/>
            <person name="Devine K.M."/>
            <person name="Duesterhoeft A."/>
            <person name="Ehrlich S.D."/>
            <person name="Emmerson P.T."/>
            <person name="Entian K.-D."/>
            <person name="Errington J."/>
            <person name="Fabret C."/>
            <person name="Ferrari E."/>
            <person name="Foulger D."/>
            <person name="Fritz C."/>
            <person name="Fujita M."/>
            <person name="Fujita Y."/>
            <person name="Fuma S."/>
            <person name="Galizzi A."/>
            <person name="Galleron N."/>
            <person name="Ghim S.-Y."/>
            <person name="Glaser P."/>
            <person name="Goffeau A."/>
            <person name="Golightly E.J."/>
            <person name="Grandi G."/>
            <person name="Guiseppi G."/>
            <person name="Guy B.J."/>
            <person name="Haga K."/>
            <person name="Haiech J."/>
            <person name="Harwood C.R."/>
            <person name="Henaut A."/>
            <person name="Hilbert H."/>
            <person name="Holsappel S."/>
            <person name="Hosono S."/>
            <person name="Hullo M.-F."/>
            <person name="Itaya M."/>
            <person name="Jones L.-M."/>
            <person name="Joris B."/>
            <person name="Karamata D."/>
            <person name="Kasahara Y."/>
            <person name="Klaerr-Blanchard M."/>
            <person name="Klein C."/>
            <person name="Kobayashi Y."/>
            <person name="Koetter P."/>
            <person name="Koningstein G."/>
            <person name="Krogh S."/>
            <person name="Kumano M."/>
            <person name="Kurita K."/>
            <person name="Lapidus A."/>
            <person name="Lardinois S."/>
            <person name="Lauber J."/>
            <person name="Lazarevic V."/>
            <person name="Lee S.-M."/>
            <person name="Levine A."/>
            <person name="Liu H."/>
            <person name="Masuda S."/>
            <person name="Mauel C."/>
            <person name="Medigue C."/>
            <person name="Medina N."/>
            <person name="Mellado R.P."/>
            <person name="Mizuno M."/>
            <person name="Moestl D."/>
            <person name="Nakai S."/>
            <person name="Noback M."/>
            <person name="Noone D."/>
            <person name="O'Reilly M."/>
            <person name="Ogawa K."/>
            <person name="Ogiwara A."/>
            <person name="Oudega B."/>
            <person name="Park S.-H."/>
            <person name="Parro V."/>
            <person name="Pohl T.M."/>
            <person name="Portetelle D."/>
            <person name="Porwollik S."/>
            <person name="Prescott A.M."/>
            <person name="Presecan E."/>
            <person name="Pujic P."/>
            <person name="Purnelle B."/>
            <person name="Rapoport G."/>
            <person name="Rey M."/>
            <person name="Reynolds S."/>
            <person name="Rieger M."/>
            <person name="Rivolta C."/>
            <person name="Rocha E."/>
            <person name="Roche B."/>
            <person name="Rose M."/>
            <person name="Sadaie Y."/>
            <person name="Sato T."/>
            <person name="Scanlan E."/>
            <person name="Schleich S."/>
            <person name="Schroeter R."/>
            <person name="Scoffone F."/>
            <person name="Sekiguchi J."/>
            <person name="Sekowska A."/>
            <person name="Seror S.J."/>
            <person name="Serror P."/>
            <person name="Shin B.-S."/>
            <person name="Soldo B."/>
            <person name="Sorokin A."/>
            <person name="Tacconi E."/>
            <person name="Takagi T."/>
            <person name="Takahashi H."/>
            <person name="Takemaru K."/>
            <person name="Takeuchi M."/>
            <person name="Tamakoshi A."/>
            <person name="Tanaka T."/>
            <person name="Terpstra P."/>
            <person name="Tognoni A."/>
            <person name="Tosato V."/>
            <person name="Uchiyama S."/>
            <person name="Vandenbol M."/>
            <person name="Vannier F."/>
            <person name="Vassarotti A."/>
            <person name="Viari A."/>
            <person name="Wambutt R."/>
            <person name="Wedler E."/>
            <person name="Wedler H."/>
            <person name="Weitzenegger T."/>
            <person name="Winters P."/>
            <person name="Wipat A."/>
            <person name="Yamamoto H."/>
            <person name="Yamane K."/>
            <person name="Yasumoto K."/>
            <person name="Yata K."/>
            <person name="Yoshida K."/>
            <person name="Yoshikawa H.-F."/>
            <person name="Zumstein E."/>
            <person name="Yoshikawa H."/>
            <person name="Danchin A."/>
        </authorList>
    </citation>
    <scope>NUCLEOTIDE SEQUENCE [LARGE SCALE GENOMIC DNA]</scope>
    <source>
        <strain>168</strain>
    </source>
</reference>
<comment type="cofactor">
    <cofactor evidence="1">
        <name>a divalent metal cation</name>
        <dbReference type="ChEBI" id="CHEBI:60240"/>
    </cofactor>
    <text evidence="1">Binds 2 divalent metal cations per subunit.</text>
</comment>
<comment type="similarity">
    <text evidence="2">Belongs to the metallo-dependent hydrolases superfamily. TatD-type hydrolase family.</text>
</comment>
<dbReference type="EC" id="3.1.-.-" evidence="2"/>
<dbReference type="EMBL" id="D26185">
    <property type="protein sequence ID" value="BAA05274.1"/>
    <property type="molecule type" value="Genomic_DNA"/>
</dbReference>
<dbReference type="EMBL" id="AL009126">
    <property type="protein sequence ID" value="CAB11815.1"/>
    <property type="molecule type" value="Genomic_DNA"/>
</dbReference>
<dbReference type="PIR" id="S66068">
    <property type="entry name" value="S66068"/>
</dbReference>
<dbReference type="RefSeq" id="WP_003226756.1">
    <property type="nucleotide sequence ID" value="NZ_OZ025638.1"/>
</dbReference>
<dbReference type="SMR" id="P37545"/>
<dbReference type="FunCoup" id="P37545">
    <property type="interactions" value="648"/>
</dbReference>
<dbReference type="STRING" id="224308.BSU00390"/>
<dbReference type="PaxDb" id="224308-BSU00390"/>
<dbReference type="EnsemblBacteria" id="CAB11815">
    <property type="protein sequence ID" value="CAB11815"/>
    <property type="gene ID" value="BSU_00390"/>
</dbReference>
<dbReference type="GeneID" id="936949"/>
<dbReference type="KEGG" id="bsu:BSU00390"/>
<dbReference type="PATRIC" id="fig|224308.179.peg.39"/>
<dbReference type="eggNOG" id="COG0084">
    <property type="taxonomic scope" value="Bacteria"/>
</dbReference>
<dbReference type="InParanoid" id="P37545"/>
<dbReference type="OrthoDB" id="9810005at2"/>
<dbReference type="PhylomeDB" id="P37545"/>
<dbReference type="BioCyc" id="BSUB:BSU00390-MONOMER"/>
<dbReference type="Proteomes" id="UP000001570">
    <property type="component" value="Chromosome"/>
</dbReference>
<dbReference type="GO" id="GO:0005829">
    <property type="term" value="C:cytosol"/>
    <property type="evidence" value="ECO:0000318"/>
    <property type="project" value="GO_Central"/>
</dbReference>
<dbReference type="GO" id="GO:0004536">
    <property type="term" value="F:DNA nuclease activity"/>
    <property type="evidence" value="ECO:0007669"/>
    <property type="project" value="InterPro"/>
</dbReference>
<dbReference type="GO" id="GO:0046872">
    <property type="term" value="F:metal ion binding"/>
    <property type="evidence" value="ECO:0007669"/>
    <property type="project" value="UniProtKB-KW"/>
</dbReference>
<dbReference type="CDD" id="cd01310">
    <property type="entry name" value="TatD_DNAse"/>
    <property type="match status" value="1"/>
</dbReference>
<dbReference type="FunFam" id="3.20.20.140:FF:000005">
    <property type="entry name" value="TatD family hydrolase"/>
    <property type="match status" value="1"/>
</dbReference>
<dbReference type="Gene3D" id="3.20.20.140">
    <property type="entry name" value="Metal-dependent hydrolases"/>
    <property type="match status" value="1"/>
</dbReference>
<dbReference type="InterPro" id="IPR018228">
    <property type="entry name" value="DNase_TatD-rel_CS"/>
</dbReference>
<dbReference type="InterPro" id="IPR032466">
    <property type="entry name" value="Metal_Hydrolase"/>
</dbReference>
<dbReference type="InterPro" id="IPR001130">
    <property type="entry name" value="TatD-like"/>
</dbReference>
<dbReference type="InterPro" id="IPR015991">
    <property type="entry name" value="TatD/YcfH-like"/>
</dbReference>
<dbReference type="NCBIfam" id="TIGR00010">
    <property type="entry name" value="YchF/TatD family DNA exonuclease"/>
    <property type="match status" value="1"/>
</dbReference>
<dbReference type="PANTHER" id="PTHR46124">
    <property type="entry name" value="D-AMINOACYL-TRNA DEACYLASE"/>
    <property type="match status" value="1"/>
</dbReference>
<dbReference type="PANTHER" id="PTHR46124:SF2">
    <property type="entry name" value="D-AMINOACYL-TRNA DEACYLASE"/>
    <property type="match status" value="1"/>
</dbReference>
<dbReference type="Pfam" id="PF01026">
    <property type="entry name" value="TatD_DNase"/>
    <property type="match status" value="1"/>
</dbReference>
<dbReference type="PIRSF" id="PIRSF005902">
    <property type="entry name" value="DNase_TatD"/>
    <property type="match status" value="1"/>
</dbReference>
<dbReference type="SUPFAM" id="SSF51556">
    <property type="entry name" value="Metallo-dependent hydrolases"/>
    <property type="match status" value="1"/>
</dbReference>
<dbReference type="PROSITE" id="PS01137">
    <property type="entry name" value="TATD_1"/>
    <property type="match status" value="1"/>
</dbReference>
<dbReference type="PROSITE" id="PS01090">
    <property type="entry name" value="TATD_2"/>
    <property type="match status" value="1"/>
</dbReference>
<dbReference type="PROSITE" id="PS01091">
    <property type="entry name" value="TATD_3"/>
    <property type="match status" value="1"/>
</dbReference>
<proteinExistence type="inferred from homology"/>
<name>YABD_BACSU</name>
<gene>
    <name type="primary">yabD</name>
    <name type="ordered locus">BSU00390</name>
</gene>
<keyword id="KW-0378">Hydrolase</keyword>
<keyword id="KW-0479">Metal-binding</keyword>
<keyword id="KW-1185">Reference proteome</keyword>
<accession>P37545</accession>
<organism>
    <name type="scientific">Bacillus subtilis (strain 168)</name>
    <dbReference type="NCBI Taxonomy" id="224308"/>
    <lineage>
        <taxon>Bacteria</taxon>
        <taxon>Bacillati</taxon>
        <taxon>Bacillota</taxon>
        <taxon>Bacilli</taxon>
        <taxon>Bacillales</taxon>
        <taxon>Bacillaceae</taxon>
        <taxon>Bacillus</taxon>
    </lineage>
</organism>
<sequence length="255" mass="29232">MLFDTHAHLNAEQYDTDLEEVIERAKAEKVERIVVVGFDRPTITRAMEMIEEYDFIYAAIGWHPVDAIDMTEEDLAWIKELSAHEKVVAIGEMGLDYHWDKSPKDIQKEVFRNQIALAKEVNLPIIIHNRDATEDVVTILKEEGAEAVGGIMHCFTGSAEVARECMKMNFYLSFGGPVTFKNAKKPKEVVKEIPNDRLLIETDCPFLTPHPFRGKRNEPSYVKYVAEQIAELKEMTFEEIASITTENAKRLFRIN</sequence>
<protein>
    <recommendedName>
        <fullName evidence="2">Uncharacterized metal-dependent hydrolase YabD</fullName>
        <ecNumber evidence="2">3.1.-.-</ecNumber>
    </recommendedName>
</protein>